<keyword id="KW-0227">DNA damage</keyword>
<keyword id="KW-0233">DNA recombination</keyword>
<keyword id="KW-0234">DNA repair</keyword>
<keyword id="KW-0479">Metal-binding</keyword>
<keyword id="KW-0862">Zinc</keyword>
<keyword id="KW-0863">Zinc-finger</keyword>
<feature type="chain" id="PRO_1000001618" description="Recombination protein RecR">
    <location>
        <begin position="1"/>
        <end position="198"/>
    </location>
</feature>
<feature type="domain" description="Toprim" evidence="1">
    <location>
        <begin position="80"/>
        <end position="175"/>
    </location>
</feature>
<feature type="zinc finger region" description="C4-type" evidence="1">
    <location>
        <begin position="57"/>
        <end position="72"/>
    </location>
</feature>
<organism>
    <name type="scientific">Staphylococcus aureus (strain Mu3 / ATCC 700698)</name>
    <dbReference type="NCBI Taxonomy" id="418127"/>
    <lineage>
        <taxon>Bacteria</taxon>
        <taxon>Bacillati</taxon>
        <taxon>Bacillota</taxon>
        <taxon>Bacilli</taxon>
        <taxon>Bacillales</taxon>
        <taxon>Staphylococcaceae</taxon>
        <taxon>Staphylococcus</taxon>
    </lineage>
</organism>
<accession>A7WYM0</accession>
<evidence type="ECO:0000255" key="1">
    <source>
        <dbReference type="HAMAP-Rule" id="MF_00017"/>
    </source>
</evidence>
<gene>
    <name evidence="1" type="primary">recR</name>
    <name type="ordered locus">SAHV_0477</name>
</gene>
<dbReference type="EMBL" id="AP009324">
    <property type="protein sequence ID" value="BAF77360.1"/>
    <property type="molecule type" value="Genomic_DNA"/>
</dbReference>
<dbReference type="RefSeq" id="WP_000559160.1">
    <property type="nucleotide sequence ID" value="NC_009782.1"/>
</dbReference>
<dbReference type="SMR" id="A7WYM0"/>
<dbReference type="KEGG" id="saw:SAHV_0477"/>
<dbReference type="HOGENOM" id="CLU_060739_1_0_9"/>
<dbReference type="GO" id="GO:0003677">
    <property type="term" value="F:DNA binding"/>
    <property type="evidence" value="ECO:0007669"/>
    <property type="project" value="UniProtKB-UniRule"/>
</dbReference>
<dbReference type="GO" id="GO:0008270">
    <property type="term" value="F:zinc ion binding"/>
    <property type="evidence" value="ECO:0007669"/>
    <property type="project" value="UniProtKB-KW"/>
</dbReference>
<dbReference type="GO" id="GO:0006310">
    <property type="term" value="P:DNA recombination"/>
    <property type="evidence" value="ECO:0007669"/>
    <property type="project" value="UniProtKB-UniRule"/>
</dbReference>
<dbReference type="GO" id="GO:0006281">
    <property type="term" value="P:DNA repair"/>
    <property type="evidence" value="ECO:0007669"/>
    <property type="project" value="UniProtKB-UniRule"/>
</dbReference>
<dbReference type="CDD" id="cd01025">
    <property type="entry name" value="TOPRIM_recR"/>
    <property type="match status" value="1"/>
</dbReference>
<dbReference type="Gene3D" id="3.30.60.80">
    <property type="match status" value="1"/>
</dbReference>
<dbReference type="Gene3D" id="3.40.1360.10">
    <property type="match status" value="1"/>
</dbReference>
<dbReference type="Gene3D" id="6.10.250.240">
    <property type="match status" value="1"/>
</dbReference>
<dbReference type="Gene3D" id="1.10.8.420">
    <property type="entry name" value="RecR Domain 1"/>
    <property type="match status" value="1"/>
</dbReference>
<dbReference type="HAMAP" id="MF_00017">
    <property type="entry name" value="RecR"/>
    <property type="match status" value="1"/>
</dbReference>
<dbReference type="InterPro" id="IPR000093">
    <property type="entry name" value="DNA_Rcmb_RecR"/>
</dbReference>
<dbReference type="InterPro" id="IPR003583">
    <property type="entry name" value="Hlx-hairpin-Hlx_DNA-bd_motif"/>
</dbReference>
<dbReference type="InterPro" id="IPR023627">
    <property type="entry name" value="Rcmb_RecR"/>
</dbReference>
<dbReference type="InterPro" id="IPR015967">
    <property type="entry name" value="Rcmb_RecR_Znf"/>
</dbReference>
<dbReference type="InterPro" id="IPR006171">
    <property type="entry name" value="TOPRIM_dom"/>
</dbReference>
<dbReference type="InterPro" id="IPR034137">
    <property type="entry name" value="TOPRIM_RecR"/>
</dbReference>
<dbReference type="NCBIfam" id="TIGR00615">
    <property type="entry name" value="recR"/>
    <property type="match status" value="1"/>
</dbReference>
<dbReference type="PANTHER" id="PTHR30446">
    <property type="entry name" value="RECOMBINATION PROTEIN RECR"/>
    <property type="match status" value="1"/>
</dbReference>
<dbReference type="PANTHER" id="PTHR30446:SF0">
    <property type="entry name" value="RECOMBINATION PROTEIN RECR"/>
    <property type="match status" value="1"/>
</dbReference>
<dbReference type="Pfam" id="PF21175">
    <property type="entry name" value="RecR_C"/>
    <property type="match status" value="1"/>
</dbReference>
<dbReference type="Pfam" id="PF21176">
    <property type="entry name" value="RecR_HhH"/>
    <property type="match status" value="1"/>
</dbReference>
<dbReference type="Pfam" id="PF02132">
    <property type="entry name" value="RecR_ZnF"/>
    <property type="match status" value="1"/>
</dbReference>
<dbReference type="Pfam" id="PF13662">
    <property type="entry name" value="Toprim_4"/>
    <property type="match status" value="1"/>
</dbReference>
<dbReference type="SMART" id="SM00278">
    <property type="entry name" value="HhH1"/>
    <property type="match status" value="1"/>
</dbReference>
<dbReference type="SMART" id="SM00493">
    <property type="entry name" value="TOPRIM"/>
    <property type="match status" value="1"/>
</dbReference>
<dbReference type="SUPFAM" id="SSF111304">
    <property type="entry name" value="Recombination protein RecR"/>
    <property type="match status" value="1"/>
</dbReference>
<dbReference type="PROSITE" id="PS01300">
    <property type="entry name" value="RECR"/>
    <property type="match status" value="1"/>
</dbReference>
<dbReference type="PROSITE" id="PS50880">
    <property type="entry name" value="TOPRIM"/>
    <property type="match status" value="1"/>
</dbReference>
<name>RECR_STAA1</name>
<comment type="function">
    <text evidence="1">May play a role in DNA repair. It seems to be involved in an RecBC-independent recombinational process of DNA repair. It may act with RecF and RecO.</text>
</comment>
<comment type="similarity">
    <text evidence="1">Belongs to the RecR family.</text>
</comment>
<reference key="1">
    <citation type="journal article" date="2008" name="Antimicrob. Agents Chemother.">
        <title>Mutated response regulator graR is responsible for phenotypic conversion of Staphylococcus aureus from heterogeneous vancomycin-intermediate resistance to vancomycin-intermediate resistance.</title>
        <authorList>
            <person name="Neoh H.-M."/>
            <person name="Cui L."/>
            <person name="Yuzawa H."/>
            <person name="Takeuchi F."/>
            <person name="Matsuo M."/>
            <person name="Hiramatsu K."/>
        </authorList>
    </citation>
    <scope>NUCLEOTIDE SEQUENCE [LARGE SCALE GENOMIC DNA]</scope>
    <source>
        <strain>Mu3 / ATCC 700698</strain>
    </source>
</reference>
<proteinExistence type="inferred from homology"/>
<sequence length="198" mass="22103">MHYPEPISKLIDSFMKLPGIGPKTAQRLAFHTLDMKEDDVVQFAKALVDVKRELTYCSVCGHITENDPCYICEDKQRDRSVICVVEDDKDVIAMEKMREYKGLYHVLHGSISPMDGIGPEDINIPSLIERLKSDEVSELILAMNPNLEGESTAMYISRLVKPIGIKVTRLAQGLSVGGDLEYADEVTLSKAITGRTEM</sequence>
<protein>
    <recommendedName>
        <fullName evidence="1">Recombination protein RecR</fullName>
    </recommendedName>
</protein>